<accession>F4IAW1</accession>
<accession>B3H6R1</accession>
<accession>P0C2G7</accession>
<accession>Q56X64</accession>
<accession>Q56XG5</accession>
<accession>Q7GAV1</accession>
<accession>Q8GXP0</accession>
<accession>Q8LPR6</accession>
<accession>Q9FE36</accession>
<accession>Q9FXK3</accession>
<accession>Q9FXK7</accession>
<sequence length="326" mass="35717">MRLPVTVKATKPSFLVIWIRYSSAASSPTVSLNPSGRLQQTLAGSVEVKGKSLHSGKFSTVKLNPEIAGAGRFFEFRSRFIPASIEFAQESPLCTTLLKDELKIRTVEHLLSALEAKGVDNCRIQIESESSDDREVEVPIFDGSAKEWVDAIQGVGINAAQNHDGESVEKMVAHVNKPVYVCKNDTFVAAFPALETRITCGIDFPQVPAIGCQWFSWRPIHESSFAKDIASSRTFCVYEEVERMREAGLIKGGSLDNAIVCSAEHGWMNPPLRFDDEACRHKILDLIGDLSLVSRGGNGGLPVAHIVAYKAGHALHTDLARHLTMD</sequence>
<feature type="transit peptide" description="Mitochondrion" evidence="3">
    <location>
        <begin position="1"/>
        <end position="21"/>
    </location>
</feature>
<feature type="chain" id="PRO_0000419661" description="Probable UDP-3-O-acyl-N-acetylglucosamine deacetylase 5, mitochondrial">
    <location>
        <begin position="22"/>
        <end position="326"/>
    </location>
</feature>
<feature type="binding site" evidence="1">
    <location>
        <position position="109"/>
    </location>
    <ligand>
        <name>Zn(2+)</name>
        <dbReference type="ChEBI" id="CHEBI:29105"/>
    </ligand>
</feature>
<feature type="binding site" evidence="1">
    <location>
        <position position="281"/>
    </location>
    <ligand>
        <name>Zn(2+)</name>
        <dbReference type="ChEBI" id="CHEBI:29105"/>
    </ligand>
</feature>
<feature type="binding site" evidence="1">
    <location>
        <position position="285"/>
    </location>
    <ligand>
        <name>Zn(2+)</name>
        <dbReference type="ChEBI" id="CHEBI:29105"/>
    </ligand>
</feature>
<comment type="function">
    <text evidence="4">Involved in the biosynthesis of lipid A, a phosphorylated glycolipid that in bacteria anchors the lipopolysaccharide to the outer membrane of the cell. Lipid A-like molecules in plants may serve as structural components of the outer membranes of mitochondria and/or chloroplasts, or may be involved in signal transduction or plant defense responses (Potential).</text>
</comment>
<comment type="catalytic activity">
    <reaction evidence="1">
        <text>a UDP-3-O-[(3R)-3-hydroxyacyl]-N-acetyl-alpha-D-glucosamine + H2O = a UDP-3-O-[(3R)-3-hydroxyacyl]-alpha-D-glucosamine + acetate</text>
        <dbReference type="Rhea" id="RHEA:67816"/>
        <dbReference type="ChEBI" id="CHEBI:15377"/>
        <dbReference type="ChEBI" id="CHEBI:30089"/>
        <dbReference type="ChEBI" id="CHEBI:137740"/>
        <dbReference type="ChEBI" id="CHEBI:173225"/>
        <dbReference type="EC" id="3.5.1.108"/>
    </reaction>
</comment>
<comment type="cofactor">
    <cofactor evidence="1">
        <name>Zn(2+)</name>
        <dbReference type="ChEBI" id="CHEBI:29105"/>
    </cofactor>
</comment>
<comment type="pathway">
    <text evidence="2">Glycolipid biosynthesis; lipid IV(A) biosynthesis; lipid IV(A) from (3R)-3-hydroxytetradecanoyl-[acyl-carrier-protein] and UDP-N-acetyl-alpha-D-glucosamine: step 2/6.</text>
</comment>
<comment type="subcellular location">
    <subcellularLocation>
        <location evidence="2 6">Mitochondrion</location>
    </subcellularLocation>
</comment>
<comment type="alternative products">
    <event type="alternative splicing"/>
    <isoform>
        <id>F4IAW1-1</id>
        <name>1</name>
        <sequence type="displayed"/>
    </isoform>
    <text>A number of isoforms are produced. According to EST sequences.</text>
</comment>
<comment type="miscellaneous">
    <text evidence="5">Plants silencing LPXC do not have altered morphology compared to wild-type plants when grown under normal growth conditions, but they do not accumulate 2,3-diacylglucosamine-1-phosphate.</text>
</comment>
<comment type="similarity">
    <text evidence="4">Belongs to the LpxC family.</text>
</comment>
<comment type="sequence caution" evidence="4">
    <conflict type="erroneous gene model prediction">
        <sequence resource="EMBL-CDS" id="AAG28816"/>
    </conflict>
    <text>The predicted gene has been split into 2 genes: At1g25210 and At1g25211.</text>
</comment>
<dbReference type="EC" id="3.5.1.108" evidence="1"/>
<dbReference type="EMBL" id="AC079374">
    <property type="protein sequence ID" value="AAG28816.2"/>
    <property type="status" value="ALT_SEQ"/>
    <property type="molecule type" value="Genomic_DNA"/>
</dbReference>
<dbReference type="EMBL" id="CP002684">
    <property type="protein sequence ID" value="AEE30587.2"/>
    <property type="molecule type" value="Genomic_DNA"/>
</dbReference>
<dbReference type="RefSeq" id="NP_001117349.4">
    <molecule id="F4IAW1-1"/>
    <property type="nucleotide sequence ID" value="NM_001123877.5"/>
</dbReference>
<dbReference type="RefSeq" id="NP_001185090.1">
    <molecule id="F4IAW1-1"/>
    <property type="nucleotide sequence ID" value="NM_001198161.1"/>
</dbReference>
<dbReference type="RefSeq" id="NP_173874.2">
    <molecule id="F4IAW1-1"/>
    <property type="nucleotide sequence ID" value="NM_102312.3"/>
</dbReference>
<dbReference type="RefSeq" id="NP_849706.4">
    <molecule id="F4IAW1-1"/>
    <property type="nucleotide sequence ID" value="NM_179375.4"/>
</dbReference>
<dbReference type="SMR" id="F4IAW1"/>
<dbReference type="FunCoup" id="F4IAW1">
    <property type="interactions" value="7"/>
</dbReference>
<dbReference type="STRING" id="3702.F4IAW1"/>
<dbReference type="EnsemblPlants" id="AT1G24793.1">
    <property type="protein sequence ID" value="AT1G24793.1"/>
    <property type="gene ID" value="AT1G24793"/>
</dbReference>
<dbReference type="EnsemblPlants" id="AT1G25054.1">
    <property type="protein sequence ID" value="AT1G25054.1"/>
    <property type="gene ID" value="AT1G25054"/>
</dbReference>
<dbReference type="EnsemblPlants" id="AT1G25145.1">
    <property type="protein sequence ID" value="AT1G25145.1"/>
    <property type="gene ID" value="AT1G25145"/>
</dbReference>
<dbReference type="EnsemblPlants" id="AT1G25210.2">
    <property type="protein sequence ID" value="AT1G25210.2"/>
    <property type="gene ID" value="AT1G25210"/>
</dbReference>
<dbReference type="GeneID" id="839102"/>
<dbReference type="Gramene" id="AT1G24793.1">
    <property type="protein sequence ID" value="AT1G24793.1"/>
    <property type="gene ID" value="AT1G24793"/>
</dbReference>
<dbReference type="Gramene" id="AT1G25054.1">
    <property type="protein sequence ID" value="AT1G25054.1"/>
    <property type="gene ID" value="AT1G25054"/>
</dbReference>
<dbReference type="Gramene" id="AT1G25145.1">
    <property type="protein sequence ID" value="AT1G25145.1"/>
    <property type="gene ID" value="AT1G25145"/>
</dbReference>
<dbReference type="Gramene" id="AT1G25210.2">
    <property type="protein sequence ID" value="AT1G25210.2"/>
    <property type="gene ID" value="AT1G25210"/>
</dbReference>
<dbReference type="KEGG" id="ath:AT1G24793"/>
<dbReference type="KEGG" id="ath:AT1G25054"/>
<dbReference type="KEGG" id="ath:AT1G25145"/>
<dbReference type="KEGG" id="ath:AT1G25210"/>
<dbReference type="Araport" id="AT1G25210"/>
<dbReference type="TAIR" id="AT1G25210">
    <property type="gene designation" value="LPXC5"/>
</dbReference>
<dbReference type="HOGENOM" id="CLU_046528_0_0_1"/>
<dbReference type="InParanoid" id="F4IAW1"/>
<dbReference type="OMA" id="IVFYRSD"/>
<dbReference type="PhylomeDB" id="F4IAW1"/>
<dbReference type="UniPathway" id="UPA00359">
    <property type="reaction ID" value="UER00478"/>
</dbReference>
<dbReference type="PRO" id="PR:F4IAW1"/>
<dbReference type="Proteomes" id="UP000006548">
    <property type="component" value="Chromosome 1"/>
</dbReference>
<dbReference type="ExpressionAtlas" id="F4IAW1">
    <property type="expression patterns" value="baseline"/>
</dbReference>
<dbReference type="GO" id="GO:0016020">
    <property type="term" value="C:membrane"/>
    <property type="evidence" value="ECO:0007669"/>
    <property type="project" value="GOC"/>
</dbReference>
<dbReference type="GO" id="GO:0005739">
    <property type="term" value="C:mitochondrion"/>
    <property type="evidence" value="ECO:0000314"/>
    <property type="project" value="UniProtKB"/>
</dbReference>
<dbReference type="GO" id="GO:0046872">
    <property type="term" value="F:metal ion binding"/>
    <property type="evidence" value="ECO:0007669"/>
    <property type="project" value="UniProtKB-KW"/>
</dbReference>
<dbReference type="GO" id="GO:0103117">
    <property type="term" value="F:UDP-3-O-acyl-N-acetylglucosamine deacetylase activity"/>
    <property type="evidence" value="ECO:0000315"/>
    <property type="project" value="UniProtKB"/>
</dbReference>
<dbReference type="GO" id="GO:0009245">
    <property type="term" value="P:lipid A biosynthetic process"/>
    <property type="evidence" value="ECO:0007669"/>
    <property type="project" value="UniProtKB-KW"/>
</dbReference>
<dbReference type="GO" id="GO:2001289">
    <property type="term" value="P:lipid X metabolic process"/>
    <property type="evidence" value="ECO:0000315"/>
    <property type="project" value="UniProtKB"/>
</dbReference>
<dbReference type="FunFam" id="3.30.230.20:FF:000002">
    <property type="entry name" value="Probable UDP-3-O-acyl-N-acetylglucosamine deacetylase 2, mitochondrial"/>
    <property type="match status" value="1"/>
</dbReference>
<dbReference type="FunFam" id="3.30.1700.10:FF:000002">
    <property type="entry name" value="Probable UDP-3-O-acyl-N-acetylglucosamine deacetylase 3, mitochondrial"/>
    <property type="match status" value="1"/>
</dbReference>
<dbReference type="Gene3D" id="3.30.230.20">
    <property type="entry name" value="lpxc deacetylase, domain 1"/>
    <property type="match status" value="1"/>
</dbReference>
<dbReference type="Gene3D" id="3.30.1700.10">
    <property type="entry name" value="lpxc deacetylase, domain 2"/>
    <property type="match status" value="1"/>
</dbReference>
<dbReference type="HAMAP" id="MF_00388">
    <property type="entry name" value="LpxC"/>
    <property type="match status" value="1"/>
</dbReference>
<dbReference type="InterPro" id="IPR020568">
    <property type="entry name" value="Ribosomal_Su5_D2-typ_SF"/>
</dbReference>
<dbReference type="InterPro" id="IPR004463">
    <property type="entry name" value="UDP-acyl_GlcNac_deAcase"/>
</dbReference>
<dbReference type="InterPro" id="IPR011334">
    <property type="entry name" value="UDP-acyl_GlcNac_deAcase_C"/>
</dbReference>
<dbReference type="InterPro" id="IPR015870">
    <property type="entry name" value="UDP-acyl_N-AcGlcN_deAcase_N"/>
</dbReference>
<dbReference type="NCBIfam" id="TIGR00325">
    <property type="entry name" value="lpxC"/>
    <property type="match status" value="1"/>
</dbReference>
<dbReference type="PANTHER" id="PTHR33694">
    <property type="entry name" value="UDP-3-O-ACYL-N-ACETYLGLUCOSAMINE DEACETYLASE 1, MITOCHONDRIAL-RELATED"/>
    <property type="match status" value="1"/>
</dbReference>
<dbReference type="PANTHER" id="PTHR33694:SF1">
    <property type="entry name" value="UDP-3-O-ACYL-N-ACETYLGLUCOSAMINE DEACETYLASE 1, MITOCHONDRIAL-RELATED"/>
    <property type="match status" value="1"/>
</dbReference>
<dbReference type="Pfam" id="PF03331">
    <property type="entry name" value="LpxC"/>
    <property type="match status" value="1"/>
</dbReference>
<dbReference type="SUPFAM" id="SSF54211">
    <property type="entry name" value="Ribosomal protein S5 domain 2-like"/>
    <property type="match status" value="2"/>
</dbReference>
<organism>
    <name type="scientific">Arabidopsis thaliana</name>
    <name type="common">Mouse-ear cress</name>
    <dbReference type="NCBI Taxonomy" id="3702"/>
    <lineage>
        <taxon>Eukaryota</taxon>
        <taxon>Viridiplantae</taxon>
        <taxon>Streptophyta</taxon>
        <taxon>Embryophyta</taxon>
        <taxon>Tracheophyta</taxon>
        <taxon>Spermatophyta</taxon>
        <taxon>Magnoliopsida</taxon>
        <taxon>eudicotyledons</taxon>
        <taxon>Gunneridae</taxon>
        <taxon>Pentapetalae</taxon>
        <taxon>rosids</taxon>
        <taxon>malvids</taxon>
        <taxon>Brassicales</taxon>
        <taxon>Brassicaceae</taxon>
        <taxon>Camelineae</taxon>
        <taxon>Arabidopsis</taxon>
    </lineage>
</organism>
<proteinExistence type="evidence at protein level"/>
<name>LPXC5_ARATH</name>
<keyword id="KW-0025">Alternative splicing</keyword>
<keyword id="KW-0378">Hydrolase</keyword>
<keyword id="KW-0441">Lipid A biosynthesis</keyword>
<keyword id="KW-0444">Lipid biosynthesis</keyword>
<keyword id="KW-0443">Lipid metabolism</keyword>
<keyword id="KW-0479">Metal-binding</keyword>
<keyword id="KW-0496">Mitochondrion</keyword>
<keyword id="KW-1185">Reference proteome</keyword>
<keyword id="KW-0809">Transit peptide</keyword>
<keyword id="KW-0862">Zinc</keyword>
<protein>
    <recommendedName>
        <fullName evidence="1">Probable UDP-3-O-acyl-N-acetylglucosamine deacetylase 5, mitochondrial</fullName>
        <shortName evidence="1">UDP-3-O-acyl-GlcNAc deacetylase 5</shortName>
        <ecNumber evidence="1">3.5.1.108</ecNumber>
    </recommendedName>
    <alternativeName>
        <fullName>Protein LIPID X C5</fullName>
        <shortName>AtLpxC5</shortName>
    </alternativeName>
    <alternativeName>
        <fullName evidence="1">UDP-3-O-[R-3-hydroxymyristoyl]-N-acetylglucosamine deacetylase 5</fullName>
    </alternativeName>
</protein>
<reference key="1">
    <citation type="journal article" date="2000" name="Nature">
        <title>Sequence and analysis of chromosome 1 of the plant Arabidopsis thaliana.</title>
        <authorList>
            <person name="Theologis A."/>
            <person name="Ecker J.R."/>
            <person name="Palm C.J."/>
            <person name="Federspiel N.A."/>
            <person name="Kaul S."/>
            <person name="White O."/>
            <person name="Alonso J."/>
            <person name="Altafi H."/>
            <person name="Araujo R."/>
            <person name="Bowman C.L."/>
            <person name="Brooks S.Y."/>
            <person name="Buehler E."/>
            <person name="Chan A."/>
            <person name="Chao Q."/>
            <person name="Chen H."/>
            <person name="Cheuk R.F."/>
            <person name="Chin C.W."/>
            <person name="Chung M.K."/>
            <person name="Conn L."/>
            <person name="Conway A.B."/>
            <person name="Conway A.R."/>
            <person name="Creasy T.H."/>
            <person name="Dewar K."/>
            <person name="Dunn P."/>
            <person name="Etgu P."/>
            <person name="Feldblyum T.V."/>
            <person name="Feng J.-D."/>
            <person name="Fong B."/>
            <person name="Fujii C.Y."/>
            <person name="Gill J.E."/>
            <person name="Goldsmith A.D."/>
            <person name="Haas B."/>
            <person name="Hansen N.F."/>
            <person name="Hughes B."/>
            <person name="Huizar L."/>
            <person name="Hunter J.L."/>
            <person name="Jenkins J."/>
            <person name="Johnson-Hopson C."/>
            <person name="Khan S."/>
            <person name="Khaykin E."/>
            <person name="Kim C.J."/>
            <person name="Koo H.L."/>
            <person name="Kremenetskaia I."/>
            <person name="Kurtz D.B."/>
            <person name="Kwan A."/>
            <person name="Lam B."/>
            <person name="Langin-Hooper S."/>
            <person name="Lee A."/>
            <person name="Lee J.M."/>
            <person name="Lenz C.A."/>
            <person name="Li J.H."/>
            <person name="Li Y.-P."/>
            <person name="Lin X."/>
            <person name="Liu S.X."/>
            <person name="Liu Z.A."/>
            <person name="Luros J.S."/>
            <person name="Maiti R."/>
            <person name="Marziali A."/>
            <person name="Militscher J."/>
            <person name="Miranda M."/>
            <person name="Nguyen M."/>
            <person name="Nierman W.C."/>
            <person name="Osborne B.I."/>
            <person name="Pai G."/>
            <person name="Peterson J."/>
            <person name="Pham P.K."/>
            <person name="Rizzo M."/>
            <person name="Rooney T."/>
            <person name="Rowley D."/>
            <person name="Sakano H."/>
            <person name="Salzberg S.L."/>
            <person name="Schwartz J.R."/>
            <person name="Shinn P."/>
            <person name="Southwick A.M."/>
            <person name="Sun H."/>
            <person name="Tallon L.J."/>
            <person name="Tambunga G."/>
            <person name="Toriumi M.J."/>
            <person name="Town C.D."/>
            <person name="Utterback T."/>
            <person name="Van Aken S."/>
            <person name="Vaysberg M."/>
            <person name="Vysotskaia V.S."/>
            <person name="Walker M."/>
            <person name="Wu D."/>
            <person name="Yu G."/>
            <person name="Fraser C.M."/>
            <person name="Venter J.C."/>
            <person name="Davis R.W."/>
        </authorList>
    </citation>
    <scope>NUCLEOTIDE SEQUENCE [LARGE SCALE GENOMIC DNA]</scope>
    <source>
        <strain>cv. Columbia</strain>
    </source>
</reference>
<reference key="2">
    <citation type="journal article" date="2017" name="Plant J.">
        <title>Araport11: a complete reannotation of the Arabidopsis thaliana reference genome.</title>
        <authorList>
            <person name="Cheng C.Y."/>
            <person name="Krishnakumar V."/>
            <person name="Chan A.P."/>
            <person name="Thibaud-Nissen F."/>
            <person name="Schobel S."/>
            <person name="Town C.D."/>
        </authorList>
    </citation>
    <scope>GENOME REANNOTATION</scope>
    <source>
        <strain>cv. Columbia</strain>
    </source>
</reference>
<reference key="3">
    <citation type="journal article" date="2011" name="Proc. Natl. Acad. Sci. U.S.A.">
        <title>Pathway for lipid A biosynthesis in Arabidopsis thaliana resembling that of Escherichia coli.</title>
        <authorList>
            <person name="Li C."/>
            <person name="Guan Z."/>
            <person name="Liu D."/>
            <person name="Raetz C.R."/>
        </authorList>
    </citation>
    <scope>PATHWAY</scope>
    <scope>SUBCELLULAR LOCATION</scope>
    <scope>GENE FAMILY</scope>
    <scope>NOMENCLATURE</scope>
</reference>
<reference key="4">
    <citation type="journal article" date="2015" name="J. Exp. Bot.">
        <title>Identification of cleavage sites and substrate proteins for two mitochondrial intermediate peptidases in Arabidopsis thaliana.</title>
        <authorList>
            <person name="Carrie C."/>
            <person name="Venne A.S."/>
            <person name="Zahedi R.P."/>
            <person name="Soll J."/>
        </authorList>
    </citation>
    <scope>IDENTIFICATION BY MASS SPECTROMETRY</scope>
    <scope>CLEAVAGE OF TRANSIT PEPTIDE AFTER TYR-21</scope>
</reference>
<gene>
    <name type="primary">LPXC5</name>
    <name type="ordered locus">At1g25210</name>
    <name type="ORF">F4F7.44</name>
</gene>
<evidence type="ECO:0000250" key="1">
    <source>
        <dbReference type="UniProtKB" id="P0A725"/>
    </source>
</evidence>
<evidence type="ECO:0000269" key="2">
    <source>
    </source>
</evidence>
<evidence type="ECO:0000269" key="3">
    <source>
    </source>
</evidence>
<evidence type="ECO:0000305" key="4"/>
<evidence type="ECO:0000305" key="5">
    <source>
    </source>
</evidence>
<evidence type="ECO:0000305" key="6">
    <source>
    </source>
</evidence>